<name>BIOC_BREBN</name>
<proteinExistence type="inferred from homology"/>
<dbReference type="EC" id="2.1.1.197" evidence="1"/>
<dbReference type="EMBL" id="AP008955">
    <property type="protein sequence ID" value="BAH46436.1"/>
    <property type="molecule type" value="Genomic_DNA"/>
</dbReference>
<dbReference type="RefSeq" id="WP_015893629.1">
    <property type="nucleotide sequence ID" value="NC_012491.1"/>
</dbReference>
<dbReference type="SMR" id="C0Z787"/>
<dbReference type="STRING" id="358681.BBR47_54590"/>
<dbReference type="KEGG" id="bbe:BBR47_54590"/>
<dbReference type="eggNOG" id="COG4106">
    <property type="taxonomic scope" value="Bacteria"/>
</dbReference>
<dbReference type="HOGENOM" id="CLU_046586_2_3_9"/>
<dbReference type="UniPathway" id="UPA00078"/>
<dbReference type="Proteomes" id="UP000001877">
    <property type="component" value="Chromosome"/>
</dbReference>
<dbReference type="GO" id="GO:0010340">
    <property type="term" value="F:carboxyl-O-methyltransferase activity"/>
    <property type="evidence" value="ECO:0007669"/>
    <property type="project" value="UniProtKB-UniRule"/>
</dbReference>
<dbReference type="GO" id="GO:0102130">
    <property type="term" value="F:malonyl-CoA methyltransferase activity"/>
    <property type="evidence" value="ECO:0007669"/>
    <property type="project" value="UniProtKB-EC"/>
</dbReference>
<dbReference type="GO" id="GO:0009102">
    <property type="term" value="P:biotin biosynthetic process"/>
    <property type="evidence" value="ECO:0007669"/>
    <property type="project" value="UniProtKB-UniRule"/>
</dbReference>
<dbReference type="GO" id="GO:0032259">
    <property type="term" value="P:methylation"/>
    <property type="evidence" value="ECO:0007669"/>
    <property type="project" value="UniProtKB-KW"/>
</dbReference>
<dbReference type="CDD" id="cd02440">
    <property type="entry name" value="AdoMet_MTases"/>
    <property type="match status" value="1"/>
</dbReference>
<dbReference type="Gene3D" id="3.40.50.150">
    <property type="entry name" value="Vaccinia Virus protein VP39"/>
    <property type="match status" value="1"/>
</dbReference>
<dbReference type="HAMAP" id="MF_00835">
    <property type="entry name" value="BioC"/>
    <property type="match status" value="1"/>
</dbReference>
<dbReference type="InterPro" id="IPR011814">
    <property type="entry name" value="BioC"/>
</dbReference>
<dbReference type="InterPro" id="IPR050602">
    <property type="entry name" value="Malonyl-ACP_OMT"/>
</dbReference>
<dbReference type="InterPro" id="IPR029063">
    <property type="entry name" value="SAM-dependent_MTases_sf"/>
</dbReference>
<dbReference type="NCBIfam" id="TIGR02072">
    <property type="entry name" value="BioC"/>
    <property type="match status" value="1"/>
</dbReference>
<dbReference type="PANTHER" id="PTHR13090">
    <property type="entry name" value="ARGININE-HYDROXYLASE NDUFAF5, MITOCHONDRIAL"/>
    <property type="match status" value="1"/>
</dbReference>
<dbReference type="PANTHER" id="PTHR13090:SF1">
    <property type="entry name" value="ARGININE-HYDROXYLASE NDUFAF5, MITOCHONDRIAL"/>
    <property type="match status" value="1"/>
</dbReference>
<dbReference type="Pfam" id="PF13489">
    <property type="entry name" value="Methyltransf_23"/>
    <property type="match status" value="1"/>
</dbReference>
<dbReference type="SUPFAM" id="SSF53335">
    <property type="entry name" value="S-adenosyl-L-methionine-dependent methyltransferases"/>
    <property type="match status" value="1"/>
</dbReference>
<protein>
    <recommendedName>
        <fullName evidence="1">Malonyl-[acyl-carrier protein] O-methyltransferase</fullName>
        <shortName evidence="1">Malonyl-ACP O-methyltransferase</shortName>
        <ecNumber evidence="1">2.1.1.197</ecNumber>
    </recommendedName>
    <alternativeName>
        <fullName evidence="1">Biotin synthesis protein BioC</fullName>
    </alternativeName>
</protein>
<feature type="chain" id="PRO_0000412487" description="Malonyl-[acyl-carrier protein] O-methyltransferase">
    <location>
        <begin position="1"/>
        <end position="278"/>
    </location>
</feature>
<evidence type="ECO:0000255" key="1">
    <source>
        <dbReference type="HAMAP-Rule" id="MF_00835"/>
    </source>
</evidence>
<organism>
    <name type="scientific">Brevibacillus brevis (strain 47 / JCM 6285 / NBRC 100599)</name>
    <dbReference type="NCBI Taxonomy" id="358681"/>
    <lineage>
        <taxon>Bacteria</taxon>
        <taxon>Bacillati</taxon>
        <taxon>Bacillota</taxon>
        <taxon>Bacilli</taxon>
        <taxon>Bacillales</taxon>
        <taxon>Paenibacillaceae</taxon>
        <taxon>Brevibacillus</taxon>
    </lineage>
</organism>
<gene>
    <name evidence="1" type="primary">bioC</name>
    <name type="ordered locus">BBR47_54590</name>
</gene>
<reference key="1">
    <citation type="submission" date="2005-03" db="EMBL/GenBank/DDBJ databases">
        <title>Brevibacillus brevis strain 47, complete genome.</title>
        <authorList>
            <person name="Hosoyama A."/>
            <person name="Yamada R."/>
            <person name="Hongo Y."/>
            <person name="Terui Y."/>
            <person name="Ankai A."/>
            <person name="Masuyama W."/>
            <person name="Sekiguchi M."/>
            <person name="Takeda T."/>
            <person name="Asano K."/>
            <person name="Ohji S."/>
            <person name="Ichikawa N."/>
            <person name="Narita S."/>
            <person name="Aoki N."/>
            <person name="Miura H."/>
            <person name="Matsushita S."/>
            <person name="Sekigawa T."/>
            <person name="Yamagata H."/>
            <person name="Yoshikawa H."/>
            <person name="Udaka S."/>
            <person name="Tanikawa S."/>
            <person name="Fujita N."/>
        </authorList>
    </citation>
    <scope>NUCLEOTIDE SEQUENCE [LARGE SCALE GENOMIC DNA]</scope>
    <source>
        <strain>47 / JCM 6285 / NBRC 100599</strain>
    </source>
</reference>
<keyword id="KW-0093">Biotin biosynthesis</keyword>
<keyword id="KW-0489">Methyltransferase</keyword>
<keyword id="KW-1185">Reference proteome</keyword>
<keyword id="KW-0949">S-adenosyl-L-methionine</keyword>
<keyword id="KW-0808">Transferase</keyword>
<sequence length="278" mass="31482">MQKRAISSRFSEKAVSYEKYALVQKKMADHLSQMVTEITNENDVRSILEIGCGTGGLTRVIRSYFSAAHYEAVEIAQGMLEQAKNNLEQHGLICSFSQADAEEWVWEQQAKSKDLIVSGACFQWFARPAHTLRGLARILKPGAPLVFSTFGPDTFWELHDSFTNAHAILGEKGVRHGLEFLSARDWHEQLEQAGFTDIEISRKYERLTYPGVRDFLHAVKAVGASVSMEQGSGLGRRKLLAEMIRYYEQTYKRETGIPVTYEVIYVRAVSSRAVTFFK</sequence>
<comment type="function">
    <text evidence="1">Converts the free carboxyl group of a malonyl-thioester to its methyl ester by transfer of a methyl group from S-adenosyl-L-methionine (SAM). It allows to synthesize pimeloyl-ACP via the fatty acid synthetic pathway.</text>
</comment>
<comment type="catalytic activity">
    <reaction evidence="1">
        <text>malonyl-[ACP] + S-adenosyl-L-methionine = malonyl-[ACP] methyl ester + S-adenosyl-L-homocysteine</text>
        <dbReference type="Rhea" id="RHEA:17105"/>
        <dbReference type="Rhea" id="RHEA-COMP:9623"/>
        <dbReference type="Rhea" id="RHEA-COMP:9954"/>
        <dbReference type="ChEBI" id="CHEBI:57856"/>
        <dbReference type="ChEBI" id="CHEBI:59789"/>
        <dbReference type="ChEBI" id="CHEBI:78449"/>
        <dbReference type="ChEBI" id="CHEBI:78845"/>
        <dbReference type="EC" id="2.1.1.197"/>
    </reaction>
</comment>
<comment type="pathway">
    <text evidence="1">Cofactor biosynthesis; biotin biosynthesis.</text>
</comment>
<comment type="similarity">
    <text evidence="1">Belongs to the methyltransferase superfamily.</text>
</comment>
<accession>C0Z787</accession>